<sequence length="240" mass="27348">MELYNIKYAIDPTNKIVIEQVDNVDAFVHILEPGQEVFDETLSRYHQFPGVVSSIIFTQLVLNTIISVLSEDGSLLPLKLENTCFNFHVCNKRFVFGNLPAAIVNNETKQKLRIGSPIFAGEKLVSVVTTFHRVGENEWLLPVTGIQEASRLSGHIKVPNGVRVEKLRPNMSVYGTVQLPYDKIKRHALEQENKTPNALESCVLFYRDSEIRITYNRGDYEIMHLRMPGPLIQPNTIYYS</sequence>
<organismHost>
    <name type="scientific">Bombyx mori</name>
    <name type="common">Silk moth</name>
    <dbReference type="NCBI Taxonomy" id="7091"/>
</organismHost>
<reference key="1">
    <citation type="journal article" date="1997" name="Gene">
        <title>Sequencing of the putative DNA helicase-encoding gene of the Bombyx mori nuclear polyhedrosis virus and fine-mapping of a region involved in host range expansion.</title>
        <authorList>
            <person name="Kamita S.G."/>
            <person name="Maeda S."/>
        </authorList>
    </citation>
    <scope>NUCLEOTIDE SEQUENCE [LARGE SCALE GENOMIC DNA]</scope>
    <source>
        <strain evidence="5">T3</strain>
    </source>
</reference>
<reference key="2">
    <citation type="journal article" date="1999" name="J. Gen. Virol.">
        <title>Sequence analysis of the genome of Bombyx mori nucleopolyhedrovirus.</title>
        <authorList>
            <person name="Gomi S."/>
            <person name="Majima K."/>
            <person name="Maeda S."/>
        </authorList>
    </citation>
    <scope>NUCLEOTIDE SEQUENCE [LARGE SCALE GENOMIC DNA]</scope>
    <source>
        <strain evidence="5">T3</strain>
    </source>
</reference>
<reference key="3">
    <citation type="submission" date="2016-05" db="EMBL/GenBank/DDBJ databases">
        <title>Characterization of a BmNPV isolated in Hokkaido, Japan.</title>
        <authorList>
            <person name="Bando H."/>
        </authorList>
    </citation>
    <scope>NUCLEOTIDE SEQUENCE [GENOMIC DNA]</scope>
    <source>
        <strain evidence="6">H4</strain>
    </source>
</reference>
<reference key="4">
    <citation type="journal article" date="2019" name="Nature">
        <title>Viral and metazoan poxins are cGAMP-specific nucleases that restrict cGAS-STING signalling.</title>
        <authorList>
            <person name="Eaglesham J.B."/>
            <person name="Pan Y."/>
            <person name="Kupper T.S."/>
            <person name="Kranzusch P.J."/>
        </authorList>
    </citation>
    <scope>FUNCTION</scope>
    <scope>CATALYTIC ACTIVITY</scope>
</reference>
<comment type="function">
    <text evidence="1 2">Nuclease that cleaves host 2',3'-cGAMP.</text>
</comment>
<comment type="catalytic activity">
    <reaction evidence="1 2">
        <text>2',3'-cGAMP + H2O = Gp(2'-5')Ap(3') + H(+)</text>
        <dbReference type="Rhea" id="RHEA:59472"/>
        <dbReference type="ChEBI" id="CHEBI:15377"/>
        <dbReference type="ChEBI" id="CHEBI:15378"/>
        <dbReference type="ChEBI" id="CHEBI:143093"/>
        <dbReference type="ChEBI" id="CHEBI:143098"/>
    </reaction>
    <physiologicalReaction direction="left-to-right" evidence="1 4">
        <dbReference type="Rhea" id="RHEA:59473"/>
    </physiologicalReaction>
</comment>
<comment type="subunit">
    <text evidence="1">Homodimer.</text>
</comment>
<comment type="domain">
    <text evidence="1">The substrate binding site is formed by the N-terminus of a monomer and the C-terminus of the opposite monomer.</text>
</comment>
<comment type="similarity">
    <text evidence="1">Belongs to the poxin family.</text>
</comment>
<organism>
    <name type="scientific">Bombyx mori nuclear polyhedrosis virus</name>
    <name type="common">BmNPV</name>
    <dbReference type="NCBI Taxonomy" id="271108"/>
    <lineage>
        <taxon>Viruses</taxon>
        <taxon>Viruses incertae sedis</taxon>
        <taxon>Naldaviricetes</taxon>
        <taxon>Lefavirales</taxon>
        <taxon>Baculoviridae</taxon>
        <taxon>Alphabaculovirus</taxon>
        <taxon>Alphabaculovirus bomori</taxon>
    </lineage>
</organism>
<evidence type="ECO:0000255" key="1">
    <source>
        <dbReference type="HAMAP-Rule" id="MF_04143"/>
    </source>
</evidence>
<evidence type="ECO:0000269" key="2">
    <source>
    </source>
</evidence>
<evidence type="ECO:0000303" key="3">
    <source>
    </source>
</evidence>
<evidence type="ECO:0000305" key="4">
    <source>
    </source>
</evidence>
<evidence type="ECO:0000312" key="5">
    <source>
        <dbReference type="EMBL" id="AAC63803.1"/>
    </source>
</evidence>
<evidence type="ECO:0000312" key="6">
    <source>
        <dbReference type="EMBL" id="BBA20619.1"/>
    </source>
</evidence>
<name>POXIN_NPVBM</name>
<protein>
    <recommendedName>
        <fullName evidence="1 3">Poxin</fullName>
        <ecNumber evidence="1 2">3.1.-.-</ecNumber>
    </recommendedName>
    <alternativeName>
        <fullName>Protein p26</fullName>
    </alternativeName>
    <alternativeName>
        <fullName>p26</fullName>
    </alternativeName>
</protein>
<gene>
    <name type="primary">p26</name>
</gene>
<proteinExistence type="evidence at protein level"/>
<accession>O92490</accession>
<keyword id="KW-0378">Hydrolase</keyword>
<keyword id="KW-0540">Nuclease</keyword>
<dbReference type="EC" id="3.1.-.-" evidence="1 2"/>
<dbReference type="EMBL" id="L33180">
    <property type="protein sequence ID" value="AAC63803.1"/>
    <property type="molecule type" value="Genomic_DNA"/>
</dbReference>
<dbReference type="EMBL" id="LC150780">
    <property type="protein sequence ID" value="BBA20619.1"/>
    <property type="molecule type" value="Genomic_DNA"/>
</dbReference>
<dbReference type="PIR" id="T41874">
    <property type="entry name" value="T41874"/>
</dbReference>
<dbReference type="RefSeq" id="NP_047534.1">
    <property type="nucleotide sequence ID" value="NC_001962.1"/>
</dbReference>
<dbReference type="SMR" id="O92490"/>
<dbReference type="GeneID" id="1488745"/>
<dbReference type="KEGG" id="vg:1488745"/>
<dbReference type="OrthoDB" id="7755at10239"/>
<dbReference type="Proteomes" id="UP000204315">
    <property type="component" value="Genome"/>
</dbReference>
<dbReference type="GO" id="GO:0061507">
    <property type="term" value="F:2',3'-cyclic GMP-AMP binding"/>
    <property type="evidence" value="ECO:0007669"/>
    <property type="project" value="UniProtKB-UniRule"/>
</dbReference>
<dbReference type="GO" id="GO:0004518">
    <property type="term" value="F:nuclease activity"/>
    <property type="evidence" value="ECO:0007669"/>
    <property type="project" value="UniProtKB-UniRule"/>
</dbReference>
<dbReference type="HAMAP" id="MF_04143">
    <property type="entry name" value="Poxins"/>
    <property type="match status" value="1"/>
</dbReference>
<dbReference type="InterPro" id="IPR006853">
    <property type="entry name" value="Poxin_vir"/>
</dbReference>
<dbReference type="Pfam" id="PF04766">
    <property type="entry name" value="Baculo_p26"/>
    <property type="match status" value="1"/>
</dbReference>
<feature type="chain" id="PRO_0000446972" description="Poxin">
    <location>
        <begin position="1"/>
        <end position="240"/>
    </location>
</feature>
<feature type="active site" description="Proton donor" evidence="1">
    <location>
        <position position="46"/>
    </location>
</feature>
<feature type="active site" description="Shared with catalytic histidine of dimeric partner" evidence="1">
    <location>
        <position position="181"/>
    </location>
</feature>
<feature type="active site" description="Proton acceptor; shared with catalytic histidine of dimeric partner" evidence="1">
    <location>
        <position position="185"/>
    </location>
</feature>
<feature type="site" description="Substrate binding" evidence="1">
    <location>
        <position position="93"/>
    </location>
</feature>
<feature type="site" description="Substrate binding" evidence="1">
    <location>
        <position position="146"/>
    </location>
</feature>
<feature type="site" description="Substrate binding" evidence="1">
    <location>
        <position position="226"/>
    </location>
</feature>